<reference key="1">
    <citation type="journal article" date="2004" name="Genome Res.">
        <title>The status, quality, and expansion of the NIH full-length cDNA project: the Mammalian Gene Collection (MGC).</title>
        <authorList>
            <consortium name="The MGC Project Team"/>
        </authorList>
    </citation>
    <scope>NUCLEOTIDE SEQUENCE [LARGE SCALE MRNA]</scope>
    <source>
        <tissue>Kidney</tissue>
    </source>
</reference>
<gene>
    <name evidence="3" type="primary">Abhd14b</name>
</gene>
<evidence type="ECO:0000250" key="1">
    <source>
        <dbReference type="UniProtKB" id="Q96IU4"/>
    </source>
</evidence>
<evidence type="ECO:0000305" key="2"/>
<evidence type="ECO:0000312" key="3">
    <source>
        <dbReference type="RGD" id="1359649"/>
    </source>
</evidence>
<name>ABHEB_RAT</name>
<feature type="chain" id="PRO_0000361280" description="Putative protein-lysine deacylase ABHD14B">
    <location>
        <begin position="1"/>
        <end position="210"/>
    </location>
</feature>
<feature type="active site" description="Charge relay system" evidence="1">
    <location>
        <position position="111"/>
    </location>
</feature>
<feature type="active site" description="Charge relay system" evidence="1">
    <location>
        <position position="162"/>
    </location>
</feature>
<feature type="active site" description="Charge relay system" evidence="1">
    <location>
        <position position="188"/>
    </location>
</feature>
<feature type="modified residue" description="Phosphoserine" evidence="1">
    <location>
        <position position="91"/>
    </location>
</feature>
<keyword id="KW-0012">Acyltransferase</keyword>
<keyword id="KW-0963">Cytoplasm</keyword>
<keyword id="KW-0539">Nucleus</keyword>
<keyword id="KW-0597">Phosphoprotein</keyword>
<keyword id="KW-1185">Reference proteome</keyword>
<keyword id="KW-0808">Transferase</keyword>
<sequence>MANVELSEGTIQVRGQSLFFREARPGNGQAVRFSVLLLHGIRFSSETWQNLGTLHRLAEAGYRAVAIDLPGLGRSKEAAAPAPIGELAPGSFLAAVVDALELGSLVVISPSLSGMYALPFLVAPESQLRGYVPVAPICTDKINAADYARVKTPTLIVYGDQDPMGSSSFQHLKQLPNHRVLVMEGAGHPCYLDKPDEWHTGLLDFLQELA</sequence>
<accession>Q6DGG1</accession>
<organism>
    <name type="scientific">Rattus norvegicus</name>
    <name type="common">Rat</name>
    <dbReference type="NCBI Taxonomy" id="10116"/>
    <lineage>
        <taxon>Eukaryota</taxon>
        <taxon>Metazoa</taxon>
        <taxon>Chordata</taxon>
        <taxon>Craniata</taxon>
        <taxon>Vertebrata</taxon>
        <taxon>Euteleostomi</taxon>
        <taxon>Mammalia</taxon>
        <taxon>Eutheria</taxon>
        <taxon>Euarchontoglires</taxon>
        <taxon>Glires</taxon>
        <taxon>Rodentia</taxon>
        <taxon>Myomorpha</taxon>
        <taxon>Muroidea</taxon>
        <taxon>Muridae</taxon>
        <taxon>Murinae</taxon>
        <taxon>Rattus</taxon>
    </lineage>
</organism>
<comment type="function">
    <text evidence="1">Acts as an atypical protein-lysine deacetylase in vitro. Catalyzes the deacetylation of lysine residues using CoA as substrate, generating acetyl-CoA and the free amine of protein-lysine residues. Additional experiments are however required to confirm the protein-lysine deacetylase activity in vivo. Has hydrolase activity towards various surrogate p-nitrophenyl (pNp) substrates, such as pNp-butyrate, pNp-acetate and pNp-octanoate in vitro, with a strong preference for pNp-acetate. May activate transcription.</text>
</comment>
<comment type="catalytic activity">
    <reaction evidence="1">
        <text>L-lysyl-[protein] + acetyl-CoA = N(6)-acetyl-L-lysyl-[protein] + CoA + H(+)</text>
        <dbReference type="Rhea" id="RHEA:45948"/>
        <dbReference type="Rhea" id="RHEA-COMP:9752"/>
        <dbReference type="Rhea" id="RHEA-COMP:10731"/>
        <dbReference type="ChEBI" id="CHEBI:15378"/>
        <dbReference type="ChEBI" id="CHEBI:29969"/>
        <dbReference type="ChEBI" id="CHEBI:57287"/>
        <dbReference type="ChEBI" id="CHEBI:57288"/>
        <dbReference type="ChEBI" id="CHEBI:61930"/>
    </reaction>
    <physiologicalReaction direction="right-to-left" evidence="1">
        <dbReference type="Rhea" id="RHEA:45950"/>
    </physiologicalReaction>
</comment>
<comment type="subunit">
    <text evidence="1">May interact with TAF1.</text>
</comment>
<comment type="subcellular location">
    <subcellularLocation>
        <location evidence="1">Cytoplasm</location>
    </subcellularLocation>
    <subcellularLocation>
        <location evidence="1">Nucleus</location>
    </subcellularLocation>
    <text evidence="1">Predominantly cytoplasmic.</text>
</comment>
<comment type="similarity">
    <text evidence="2">Belongs to the AB hydrolase superfamily. ABHD14 family.</text>
</comment>
<comment type="caution">
    <text evidence="1">The protein-lysine deacetylase activity using CoA as substrate is unclear as this protein belongs to a family of serine hydrolases, and that the reaction shown in the publication is not hydrolyzing H(2)O (By similarity). Additional experiments are therefore required to confirm this activity in vivo (By similarity).</text>
</comment>
<protein>
    <recommendedName>
        <fullName evidence="2">Putative protein-lysine deacylase ABHD14B</fullName>
        <ecNumber evidence="1">2.3.1.-</ecNumber>
    </recommendedName>
    <alternativeName>
        <fullName evidence="2">Alpha/beta hydrolase domain-containing protein 14B</fullName>
        <shortName evidence="3">Abhydrolase domain-containing protein 14B</shortName>
    </alternativeName>
</protein>
<proteinExistence type="evidence at transcript level"/>
<dbReference type="EC" id="2.3.1.-" evidence="1"/>
<dbReference type="EMBL" id="BC076385">
    <property type="protein sequence ID" value="AAH76385.1"/>
    <property type="molecule type" value="mRNA"/>
</dbReference>
<dbReference type="RefSeq" id="NP_001007665.1">
    <property type="nucleotide sequence ID" value="NM_001007664.1"/>
</dbReference>
<dbReference type="RefSeq" id="XP_006243786.1">
    <property type="nucleotide sequence ID" value="XM_006243724.2"/>
</dbReference>
<dbReference type="SMR" id="Q6DGG1"/>
<dbReference type="FunCoup" id="Q6DGG1">
    <property type="interactions" value="522"/>
</dbReference>
<dbReference type="IntAct" id="Q6DGG1">
    <property type="interactions" value="3"/>
</dbReference>
<dbReference type="STRING" id="10116.ENSRNOP00000016504"/>
<dbReference type="ESTHER" id="rat-abheb">
    <property type="family name" value="CIB-CCG1-interacting-factor-B"/>
</dbReference>
<dbReference type="iPTMnet" id="Q6DGG1"/>
<dbReference type="PhosphoSitePlus" id="Q6DGG1"/>
<dbReference type="jPOST" id="Q6DGG1"/>
<dbReference type="PaxDb" id="10116-ENSRNOP00000016504"/>
<dbReference type="Ensembl" id="ENSRNOT00000016504.8">
    <property type="protein sequence ID" value="ENSRNOP00000016504.4"/>
    <property type="gene ID" value="ENSRNOG00000012073.9"/>
</dbReference>
<dbReference type="GeneID" id="300983"/>
<dbReference type="KEGG" id="rno:300983"/>
<dbReference type="UCSC" id="RGD:1359649">
    <property type="organism name" value="rat"/>
</dbReference>
<dbReference type="AGR" id="RGD:1359649"/>
<dbReference type="CTD" id="84836"/>
<dbReference type="RGD" id="1359649">
    <property type="gene designation" value="Abhd14b"/>
</dbReference>
<dbReference type="eggNOG" id="ENOG502QR0B">
    <property type="taxonomic scope" value="Eukaryota"/>
</dbReference>
<dbReference type="GeneTree" id="ENSGT00940000159388"/>
<dbReference type="HOGENOM" id="CLU_020336_28_0_1"/>
<dbReference type="InParanoid" id="Q6DGG1"/>
<dbReference type="OMA" id="GEVVLWY"/>
<dbReference type="OrthoDB" id="284184at2759"/>
<dbReference type="PhylomeDB" id="Q6DGG1"/>
<dbReference type="TreeFam" id="TF314465"/>
<dbReference type="Reactome" id="R-RNO-156584">
    <property type="pathway name" value="Cytosolic sulfonation of small molecules"/>
</dbReference>
<dbReference type="PRO" id="PR:Q6DGG1"/>
<dbReference type="Proteomes" id="UP000002494">
    <property type="component" value="Chromosome 8"/>
</dbReference>
<dbReference type="Bgee" id="ENSRNOG00000012073">
    <property type="expression patterns" value="Expressed in adult mammalian kidney and 19 other cell types or tissues"/>
</dbReference>
<dbReference type="ExpressionAtlas" id="Q6DGG1">
    <property type="expression patterns" value="baseline and differential"/>
</dbReference>
<dbReference type="GO" id="GO:0005737">
    <property type="term" value="C:cytoplasm"/>
    <property type="evidence" value="ECO:0000318"/>
    <property type="project" value="GO_Central"/>
</dbReference>
<dbReference type="GO" id="GO:0005829">
    <property type="term" value="C:cytosol"/>
    <property type="evidence" value="ECO:0000266"/>
    <property type="project" value="RGD"/>
</dbReference>
<dbReference type="GO" id="GO:0005730">
    <property type="term" value="C:nucleolus"/>
    <property type="evidence" value="ECO:0007669"/>
    <property type="project" value="Ensembl"/>
</dbReference>
<dbReference type="GO" id="GO:0005654">
    <property type="term" value="C:nucleoplasm"/>
    <property type="evidence" value="ECO:0007669"/>
    <property type="project" value="Ensembl"/>
</dbReference>
<dbReference type="GO" id="GO:0005634">
    <property type="term" value="C:nucleus"/>
    <property type="evidence" value="ECO:0000266"/>
    <property type="project" value="RGD"/>
</dbReference>
<dbReference type="GO" id="GO:0016787">
    <property type="term" value="F:hydrolase activity"/>
    <property type="evidence" value="ECO:0000266"/>
    <property type="project" value="RGD"/>
</dbReference>
<dbReference type="GO" id="GO:0061733">
    <property type="term" value="F:protein-lysine-acetyltransferase activity"/>
    <property type="evidence" value="ECO:0007669"/>
    <property type="project" value="RHEA"/>
</dbReference>
<dbReference type="GO" id="GO:0045944">
    <property type="term" value="P:positive regulation of transcription by RNA polymerase II"/>
    <property type="evidence" value="ECO:0000266"/>
    <property type="project" value="RGD"/>
</dbReference>
<dbReference type="FunFam" id="3.40.50.1820:FF:000077">
    <property type="entry name" value="Abhydrolase domain containing 14B"/>
    <property type="match status" value="1"/>
</dbReference>
<dbReference type="Gene3D" id="3.40.50.1820">
    <property type="entry name" value="alpha/beta hydrolase"/>
    <property type="match status" value="1"/>
</dbReference>
<dbReference type="InterPro" id="IPR000073">
    <property type="entry name" value="AB_hydrolase_1"/>
</dbReference>
<dbReference type="InterPro" id="IPR029058">
    <property type="entry name" value="AB_hydrolase_fold"/>
</dbReference>
<dbReference type="PANTHER" id="PTHR46197">
    <property type="entry name" value="PROTEIN ABHD14B-LIKE"/>
    <property type="match status" value="1"/>
</dbReference>
<dbReference type="PANTHER" id="PTHR46197:SF2">
    <property type="entry name" value="PROTEIN-LYSINE DEACYLASE ABHD14B-RELATED"/>
    <property type="match status" value="1"/>
</dbReference>
<dbReference type="Pfam" id="PF12697">
    <property type="entry name" value="Abhydrolase_6"/>
    <property type="match status" value="1"/>
</dbReference>
<dbReference type="SUPFAM" id="SSF53474">
    <property type="entry name" value="alpha/beta-Hydrolases"/>
    <property type="match status" value="1"/>
</dbReference>